<gene>
    <name type="primary">LOV1</name>
    <name type="synonym">RPP8L1</name>
</gene>
<sequence length="910" mass="104511">MAEGVVLFGVHKLWELLNRESARLNGIGEQVDGLKRQLGRLQSLLKDADAKKHESERVRNFLEDVRDIVYDAEDIIESFLLNEFRTKEKGIKKHARRLACFLVDRRKFASDIKGITKKISEVIGGMKSLGIQEIIDGASSMSLQERQREQKEIRQTFANSSESDLVGVEQSVEALAGHLVENDNIQVVSISGMGGIGKTTLARQVFHHDMVQRHFDGFAWVFVSQQFTQKHVWQRIWQELQPQNGDISHMDEHILQGKLFKLLETGRYLVVLDDVWKEEDWDRIKAVFPRKRGWKMLLTSRNEGVGIHADPKSFGFKTRILTPEESWKLCEKIVFHRRDETGTLSEVRVDEDMEAMGKEMVTCCGGLPLAVKVLGGLLATKHTVPEWKRVYDNIGPHLAGRSSLDDNLNSIYRVLSLSYEDLPMCLKHCFLYLAHFPEYYEIHVKRLFNYLAAEGIITSSDDGTTIQDKGEDYLEELARRNMITIDKNYMFLRKKHCQMHDMMREVCLSKAKEENFLEIFKVSTATSAINARSLSKSRRLSVHGGNALQSLGQTINKKVRSLLYFAFEDEFCILESTTPCFRSLPLLRVLDLSRVKFEGGKLPSSIGDLIHLRFLSLHRAWISHLPSSLRNLKLLLYLNLGFNGMVHVPNVLKEMQELRYLQLPMSMHDKTKLELSDLVNLESLMNFSTKYASVMDLLHMTKLRELSLFITDGSSDTLSSSLGQLRSLEVLHLYDRQEPRVAYHGGEIVLNCIHLKELELAIHMPRFPDQYLFHPHLSHIYLWCCSMEEDPIPILERLLHLKSVILTFGAFVGRRMVCSKGGFPQLCFLKLEELEELEEWIVEEGSMPLLRALTICNCRKLKLPGGINYITSLKELTIVGMKWKEKLVPGGEDYYKVQNIPNVQFINCDE</sequence>
<evidence type="ECO:0000250" key="1"/>
<evidence type="ECO:0000255" key="2"/>
<evidence type="ECO:0000269" key="3">
    <source>
    </source>
</evidence>
<evidence type="ECO:0000269" key="4">
    <source>
    </source>
</evidence>
<evidence type="ECO:0000269" key="5">
    <source>
    </source>
</evidence>
<evidence type="ECO:0000305" key="6"/>
<comment type="function">
    <text evidence="3 4">Confers susceptibility to the fungus Cochliobolus victoriae by conditioning victorin-dependent (victorin is a toxin synthesized by C.victoriae) induction of defense-associated proteins.</text>
</comment>
<comment type="induction">
    <text evidence="5">Repressed by silencing mediated by polycomb group (PcG) protein complex containing EMF1 and EMF2.</text>
</comment>
<comment type="domain">
    <text evidence="1">The LRR repeats probably act as specificity determinant of pathogen recognition.</text>
</comment>
<comment type="similarity">
    <text evidence="6">Belongs to the disease resistance NB-LRR family. RPP8/HRT subfamily.</text>
</comment>
<comment type="caution">
    <text evidence="6">Has been shown to be a pseudogene in cv. Columbia (AC O04093) due to a stop codon at position 117 and a naturally occurring frameshift at position 846 in this strain. The sequence shown is from strain cv. Cl-0.</text>
</comment>
<comment type="online information" name="NIB-LRRS">
    <link uri="http://niblrrs.ucdavis.edu"/>
    <text>Functional and comparative genomics of disease resistance gene homologs</text>
</comment>
<feature type="chain" id="PRO_0000405407" description="Disease susceptibility protein LOV1">
    <location>
        <begin position="1"/>
        <end position="910"/>
    </location>
</feature>
<feature type="domain" description="NB-ARC">
    <location>
        <begin position="169"/>
        <end position="461"/>
    </location>
</feature>
<feature type="repeat" description="LRR 1">
    <location>
        <begin position="584"/>
        <end position="609"/>
    </location>
</feature>
<feature type="repeat" description="LRR 2">
    <location>
        <begin position="610"/>
        <end position="632"/>
    </location>
</feature>
<feature type="repeat" description="LRR 3">
    <location>
        <begin position="634"/>
        <end position="655"/>
    </location>
</feature>
<feature type="repeat" description="LRR 4">
    <location>
        <begin position="700"/>
        <end position="725"/>
    </location>
</feature>
<feature type="repeat" description="LRR 5">
    <location>
        <begin position="726"/>
        <end position="751"/>
    </location>
</feature>
<feature type="repeat" description="LRR 6">
    <location>
        <begin position="847"/>
        <end position="871"/>
    </location>
</feature>
<feature type="coiled-coil region" evidence="2">
    <location>
        <begin position="22"/>
        <end position="60"/>
    </location>
</feature>
<feature type="mutagenesis site" description="Loss of victorin sensitivity." evidence="4">
    <original>G</original>
    <variation>E</variation>
    <location>
        <position position="192"/>
    </location>
</feature>
<feature type="mutagenesis site" description="Loss of victorin sensitivity." evidence="4">
    <original>A</original>
    <variation>V</variation>
    <location>
        <position position="370"/>
    </location>
</feature>
<feature type="mutagenesis site" description="Loss of victorin sensitivity." evidence="4">
    <original>G</original>
    <variation>R</variation>
    <location>
        <position position="375"/>
    </location>
</feature>
<feature type="mutagenesis site" description="Loss of victorin sensitivity." evidence="4">
    <original>A</original>
    <variation>T</variation>
    <location>
        <position position="434"/>
    </location>
</feature>
<feature type="mutagenesis site" description="Loss of victorin sensitivity." evidence="4">
    <original>P</original>
    <variation>L</variation>
    <variation>S</variation>
    <location>
        <position position="437"/>
    </location>
</feature>
<feature type="mutagenesis site" description="Loss of victorin sensitivity." evidence="4">
    <original>G</original>
    <variation>E</variation>
    <variation>R</variation>
    <location>
        <position position="470"/>
    </location>
</feature>
<feature type="mutagenesis site" description="Loss of victorin sensitivity." evidence="4">
    <original>A</original>
    <variation>T</variation>
    <location>
        <position position="511"/>
    </location>
</feature>
<feature type="mutagenesis site" description="Loss of victorin sensitivity." evidence="4">
    <original>L</original>
    <variation>F</variation>
    <location>
        <position position="777"/>
    </location>
</feature>
<feature type="mutagenesis site" description="Loss of victorin sensitivity." evidence="4">
    <original>G</original>
    <variation>D</variation>
    <location>
        <position position="822"/>
    </location>
</feature>
<proteinExistence type="evidence at protein level"/>
<name>LOV1B_ARATH</name>
<reference key="1">
    <citation type="journal article" date="2007" name="Proc. Natl. Acad. Sci. U.S.A.">
        <title>Plant disease susceptibility conferred by a 'resistance' gene.</title>
        <authorList>
            <person name="Lorang J.M."/>
            <person name="Sweat T.A."/>
            <person name="Wolpert T.J."/>
        </authorList>
    </citation>
    <scope>NUCLEOTIDE SEQUENCE [GENOMIC DNA]</scope>
    <scope>FUNCTION</scope>
    <source>
        <strain>cv. Cl-0</strain>
        <strain>cv. Col-4</strain>
    </source>
</reference>
<reference key="2">
    <citation type="journal article" date="2008" name="Mol. Plant Microbe Interact.">
        <title>Characterization of natural and induced variation in the LOV1 gene, a CC-NB-LRR gene conferring victorin sensitivity and disease susceptibility in Arabidopsis.</title>
        <authorList>
            <person name="Sweat T.A."/>
            <person name="Lorang J.M."/>
            <person name="Bakker E.G."/>
            <person name="Wolpert T.J."/>
        </authorList>
    </citation>
    <scope>NUCLEOTIDE SEQUENCE [GENOMIC DNA]</scope>
    <scope>FUNCTION</scope>
    <scope>MUTAGENESIS OF GLY-192; ALA-370; GLY-375; ALA-434; PRO-437; GLY-470; ALA-511; LEU-777 AND GLY-822</scope>
    <source>
        <strain>cv. Bil-5</strain>
        <strain>cv. Landsberg erecta</strain>
        <strain>cv. Lov-1</strain>
        <strain>cv. RRS-10</strain>
        <strain>cv. Rubezhnoe-2</strain>
        <strain>cv. Tol-0</strain>
        <strain>cv. Yo-0</strain>
    </source>
</reference>
<reference key="3">
    <citation type="journal article" date="2010" name="Plant Physiol.">
        <title>Epigenetic regulation of gene programs by EMF1 and EMF2 in Arabidopsis.</title>
        <authorList>
            <person name="Kim S.Y."/>
            <person name="Zhu T."/>
            <person name="Sung Z.R."/>
        </authorList>
    </citation>
    <scope>INDUCTION BY EMF1 AND EMF2</scope>
</reference>
<protein>
    <recommendedName>
        <fullName>Disease susceptibility protein LOV1</fullName>
    </recommendedName>
    <alternativeName>
        <fullName>Disease resistance protein RPP8-like protein 1</fullName>
    </alternativeName>
    <alternativeName>
        <fullName>Protein LONG VEGETATIVE PHASE1</fullName>
    </alternativeName>
</protein>
<organism>
    <name type="scientific">Arabidopsis thaliana</name>
    <name type="common">Mouse-ear cress</name>
    <dbReference type="NCBI Taxonomy" id="3702"/>
    <lineage>
        <taxon>Eukaryota</taxon>
        <taxon>Viridiplantae</taxon>
        <taxon>Streptophyta</taxon>
        <taxon>Embryophyta</taxon>
        <taxon>Tracheophyta</taxon>
        <taxon>Spermatophyta</taxon>
        <taxon>Magnoliopsida</taxon>
        <taxon>eudicotyledons</taxon>
        <taxon>Gunneridae</taxon>
        <taxon>Pentapetalae</taxon>
        <taxon>rosids</taxon>
        <taxon>malvids</taxon>
        <taxon>Brassicales</taxon>
        <taxon>Brassicaceae</taxon>
        <taxon>Camelineae</taxon>
        <taxon>Arabidopsis</taxon>
    </lineage>
</organism>
<accession>A7XGN8</accession>
<accession>A9QGV0</accession>
<dbReference type="EMBL" id="EF472599">
    <property type="protein sequence ID" value="ABO69702.1"/>
    <property type="molecule type" value="Genomic_DNA"/>
</dbReference>
<dbReference type="EMBL" id="EU053655">
    <property type="protein sequence ID" value="ABW24143.1"/>
    <property type="molecule type" value="Genomic_DNA"/>
</dbReference>
<dbReference type="EMBL" id="EU053658">
    <property type="protein sequence ID" value="ABW24146.1"/>
    <property type="molecule type" value="Genomic_DNA"/>
</dbReference>
<dbReference type="EMBL" id="EU053660">
    <property type="protein sequence ID" value="ABW24148.1"/>
    <property type="molecule type" value="Genomic_DNA"/>
</dbReference>
<dbReference type="EMBL" id="EU053664">
    <property type="protein sequence ID" value="ABW24152.1"/>
    <property type="molecule type" value="Genomic_DNA"/>
</dbReference>
<dbReference type="EMBL" id="EU053667">
    <property type="protein sequence ID" value="ABW24155.1"/>
    <property type="molecule type" value="Genomic_DNA"/>
</dbReference>
<dbReference type="EMBL" id="EU053670">
    <property type="protein sequence ID" value="ABW24158.1"/>
    <property type="molecule type" value="Genomic_DNA"/>
</dbReference>
<dbReference type="EMBL" id="EU053675">
    <property type="protein sequence ID" value="ABW24163.1"/>
    <property type="molecule type" value="Genomic_DNA"/>
</dbReference>
<dbReference type="EMBL" id="EU053680">
    <property type="protein sequence ID" value="ABW24168.1"/>
    <property type="molecule type" value="Genomic_DNA"/>
</dbReference>
<dbReference type="EMBL" id="EU053681">
    <property type="protein sequence ID" value="ABW24169.1"/>
    <property type="molecule type" value="Genomic_DNA"/>
</dbReference>
<dbReference type="SMR" id="A7XGN8"/>
<dbReference type="DIP" id="DIP-61887N"/>
<dbReference type="IntAct" id="A7XGN8">
    <property type="interactions" value="2"/>
</dbReference>
<dbReference type="ExpressionAtlas" id="A7XGN8">
    <property type="expression patterns" value="baseline and differential"/>
</dbReference>
<dbReference type="GO" id="GO:0043531">
    <property type="term" value="F:ADP binding"/>
    <property type="evidence" value="ECO:0007669"/>
    <property type="project" value="InterPro"/>
</dbReference>
<dbReference type="GO" id="GO:0005524">
    <property type="term" value="F:ATP binding"/>
    <property type="evidence" value="ECO:0007669"/>
    <property type="project" value="UniProtKB-KW"/>
</dbReference>
<dbReference type="GO" id="GO:0006952">
    <property type="term" value="P:defense response"/>
    <property type="evidence" value="ECO:0000314"/>
    <property type="project" value="UniProtKB"/>
</dbReference>
<dbReference type="GO" id="GO:0009620">
    <property type="term" value="P:response to fungus"/>
    <property type="evidence" value="ECO:0000314"/>
    <property type="project" value="UniProtKB"/>
</dbReference>
<dbReference type="GO" id="GO:0002238">
    <property type="term" value="P:response to molecule of fungal origin"/>
    <property type="evidence" value="ECO:0000314"/>
    <property type="project" value="UniProtKB"/>
</dbReference>
<dbReference type="CDD" id="cd14798">
    <property type="entry name" value="RX-CC_like"/>
    <property type="match status" value="1"/>
</dbReference>
<dbReference type="FunFam" id="1.20.5.4130:FF:000002">
    <property type="entry name" value="Disease resistance protein RPP8"/>
    <property type="match status" value="1"/>
</dbReference>
<dbReference type="FunFam" id="3.80.10.10:FF:001707">
    <property type="entry name" value="Inactive disease susceptibility protein LOV1"/>
    <property type="match status" value="1"/>
</dbReference>
<dbReference type="FunFam" id="3.80.10.10:FF:001978">
    <property type="entry name" value="Inactive disease susceptibility protein LOV1"/>
    <property type="match status" value="1"/>
</dbReference>
<dbReference type="FunFam" id="3.40.50.300:FF:001091">
    <property type="entry name" value="Probable disease resistance protein At1g61300"/>
    <property type="match status" value="1"/>
</dbReference>
<dbReference type="FunFam" id="1.10.10.10:FF:000322">
    <property type="entry name" value="Probable disease resistance protein At1g63360"/>
    <property type="match status" value="1"/>
</dbReference>
<dbReference type="FunFam" id="1.10.8.430:FF:000003">
    <property type="entry name" value="Probable disease resistance protein At5g66910"/>
    <property type="match status" value="1"/>
</dbReference>
<dbReference type="Gene3D" id="1.20.5.4130">
    <property type="match status" value="1"/>
</dbReference>
<dbReference type="Gene3D" id="1.10.8.430">
    <property type="entry name" value="Helical domain of apoptotic protease-activating factors"/>
    <property type="match status" value="1"/>
</dbReference>
<dbReference type="Gene3D" id="3.40.50.300">
    <property type="entry name" value="P-loop containing nucleotide triphosphate hydrolases"/>
    <property type="match status" value="1"/>
</dbReference>
<dbReference type="Gene3D" id="3.80.10.10">
    <property type="entry name" value="Ribonuclease Inhibitor"/>
    <property type="match status" value="2"/>
</dbReference>
<dbReference type="Gene3D" id="1.10.10.10">
    <property type="entry name" value="Winged helix-like DNA-binding domain superfamily/Winged helix DNA-binding domain"/>
    <property type="match status" value="1"/>
</dbReference>
<dbReference type="InterPro" id="IPR042197">
    <property type="entry name" value="Apaf_helical"/>
</dbReference>
<dbReference type="InterPro" id="IPR044974">
    <property type="entry name" value="Disease_R_plants"/>
</dbReference>
<dbReference type="InterPro" id="IPR032675">
    <property type="entry name" value="LRR_dom_sf"/>
</dbReference>
<dbReference type="InterPro" id="IPR055414">
    <property type="entry name" value="LRR_R13L4/SHOC2-like"/>
</dbReference>
<dbReference type="InterPro" id="IPR002182">
    <property type="entry name" value="NB-ARC"/>
</dbReference>
<dbReference type="InterPro" id="IPR027417">
    <property type="entry name" value="P-loop_NTPase"/>
</dbReference>
<dbReference type="InterPro" id="IPR038005">
    <property type="entry name" value="RX-like_CC"/>
</dbReference>
<dbReference type="InterPro" id="IPR041118">
    <property type="entry name" value="Rx_N"/>
</dbReference>
<dbReference type="InterPro" id="IPR036388">
    <property type="entry name" value="WH-like_DNA-bd_sf"/>
</dbReference>
<dbReference type="PANTHER" id="PTHR23155">
    <property type="entry name" value="DISEASE RESISTANCE PROTEIN RP"/>
    <property type="match status" value="1"/>
</dbReference>
<dbReference type="PANTHER" id="PTHR23155:SF1185">
    <property type="entry name" value="DISEASE RESISTANCE RPP8-LIKE PROTEIN 3-RELATED"/>
    <property type="match status" value="1"/>
</dbReference>
<dbReference type="Pfam" id="PF23598">
    <property type="entry name" value="LRR_14"/>
    <property type="match status" value="1"/>
</dbReference>
<dbReference type="Pfam" id="PF00931">
    <property type="entry name" value="NB-ARC"/>
    <property type="match status" value="1"/>
</dbReference>
<dbReference type="Pfam" id="PF18052">
    <property type="entry name" value="Rx_N"/>
    <property type="match status" value="1"/>
</dbReference>
<dbReference type="Pfam" id="PF23559">
    <property type="entry name" value="WH_DRP"/>
    <property type="match status" value="1"/>
</dbReference>
<dbReference type="PRINTS" id="PR00364">
    <property type="entry name" value="DISEASERSIST"/>
</dbReference>
<dbReference type="SUPFAM" id="SSF52058">
    <property type="entry name" value="L domain-like"/>
    <property type="match status" value="1"/>
</dbReference>
<dbReference type="SUPFAM" id="SSF52540">
    <property type="entry name" value="P-loop containing nucleoside triphosphate hydrolases"/>
    <property type="match status" value="1"/>
</dbReference>
<keyword id="KW-0067">ATP-binding</keyword>
<keyword id="KW-0175">Coiled coil</keyword>
<keyword id="KW-0433">Leucine-rich repeat</keyword>
<keyword id="KW-0547">Nucleotide-binding</keyword>
<keyword id="KW-0611">Plant defense</keyword>
<keyword id="KW-0677">Repeat</keyword>